<dbReference type="EMBL" id="CH445359">
    <property type="protein sequence ID" value="EAT77598.1"/>
    <property type="molecule type" value="Genomic_DNA"/>
</dbReference>
<dbReference type="RefSeq" id="XP_001805218.1">
    <property type="nucleotide sequence ID" value="XM_001805166.1"/>
</dbReference>
<dbReference type="SMR" id="Q0TZN8"/>
<dbReference type="FunCoup" id="Q0TZN8">
    <property type="interactions" value="90"/>
</dbReference>
<dbReference type="STRING" id="321614.Q0TZN8"/>
<dbReference type="EnsemblFungi" id="SNOT_15055">
    <property type="protein sequence ID" value="SNOT_15055"/>
    <property type="gene ID" value="SNOG_15055"/>
</dbReference>
<dbReference type="GeneID" id="5982146"/>
<dbReference type="KEGG" id="pno:SNOG_15055"/>
<dbReference type="VEuPathDB" id="FungiDB:JI435_150550"/>
<dbReference type="eggNOG" id="KOG3830">
    <property type="taxonomic scope" value="Eukaryota"/>
</dbReference>
<dbReference type="HOGENOM" id="CLU_014314_1_0_1"/>
<dbReference type="InParanoid" id="Q0TZN8"/>
<dbReference type="OMA" id="RTDYVWK"/>
<dbReference type="OrthoDB" id="18648at2759"/>
<dbReference type="Proteomes" id="UP000001055">
    <property type="component" value="Unassembled WGS sequence"/>
</dbReference>
<dbReference type="GO" id="GO:1990130">
    <property type="term" value="C:GATOR1 complex"/>
    <property type="evidence" value="ECO:0000318"/>
    <property type="project" value="GO_Central"/>
</dbReference>
<dbReference type="GO" id="GO:0034198">
    <property type="term" value="P:cellular response to amino acid starvation"/>
    <property type="evidence" value="ECO:0000318"/>
    <property type="project" value="GO_Central"/>
</dbReference>
<dbReference type="GO" id="GO:0051321">
    <property type="term" value="P:meiotic cell cycle"/>
    <property type="evidence" value="ECO:0007669"/>
    <property type="project" value="UniProtKB-KW"/>
</dbReference>
<dbReference type="GO" id="GO:1904262">
    <property type="term" value="P:negative regulation of TORC1 signaling"/>
    <property type="evidence" value="ECO:0000318"/>
    <property type="project" value="GO_Central"/>
</dbReference>
<dbReference type="GO" id="GO:0010508">
    <property type="term" value="P:positive regulation of autophagy"/>
    <property type="evidence" value="ECO:0000318"/>
    <property type="project" value="GO_Central"/>
</dbReference>
<dbReference type="InterPro" id="IPR056603">
    <property type="entry name" value="HTH_NPRL3"/>
</dbReference>
<dbReference type="InterPro" id="IPR005365">
    <property type="entry name" value="Npr3"/>
</dbReference>
<dbReference type="PANTHER" id="PTHR13153">
    <property type="entry name" value="CGTHBA PROTEIN -14 GENE PROTEIN"/>
    <property type="match status" value="1"/>
</dbReference>
<dbReference type="PANTHER" id="PTHR13153:SF5">
    <property type="entry name" value="GATOR COMPLEX PROTEIN NPRL3"/>
    <property type="match status" value="1"/>
</dbReference>
<dbReference type="Pfam" id="PF24064">
    <property type="entry name" value="HTH_NPRL3"/>
    <property type="match status" value="1"/>
</dbReference>
<dbReference type="Pfam" id="PF03666">
    <property type="entry name" value="NPR3"/>
    <property type="match status" value="1"/>
</dbReference>
<reference key="1">
    <citation type="journal article" date="2007" name="Plant Cell">
        <title>Dothideomycete-plant interactions illuminated by genome sequencing and EST analysis of the wheat pathogen Stagonospora nodorum.</title>
        <authorList>
            <person name="Hane J.K."/>
            <person name="Lowe R.G.T."/>
            <person name="Solomon P.S."/>
            <person name="Tan K.-C."/>
            <person name="Schoch C.L."/>
            <person name="Spatafora J.W."/>
            <person name="Crous P.W."/>
            <person name="Kodira C.D."/>
            <person name="Birren B.W."/>
            <person name="Galagan J.E."/>
            <person name="Torriani S.F.F."/>
            <person name="McDonald B.A."/>
            <person name="Oliver R.P."/>
        </authorList>
    </citation>
    <scope>NUCLEOTIDE SEQUENCE [LARGE SCALE GENOMIC DNA]</scope>
    <source>
        <strain>SN15 / ATCC MYA-4574 / FGSC 10173</strain>
    </source>
</reference>
<name>NPR3_PHANO</name>
<organism>
    <name type="scientific">Phaeosphaeria nodorum (strain SN15 / ATCC MYA-4574 / FGSC 10173)</name>
    <name type="common">Glume blotch fungus</name>
    <name type="synonym">Parastagonospora nodorum</name>
    <dbReference type="NCBI Taxonomy" id="321614"/>
    <lineage>
        <taxon>Eukaryota</taxon>
        <taxon>Fungi</taxon>
        <taxon>Dikarya</taxon>
        <taxon>Ascomycota</taxon>
        <taxon>Pezizomycotina</taxon>
        <taxon>Dothideomycetes</taxon>
        <taxon>Pleosporomycetidae</taxon>
        <taxon>Pleosporales</taxon>
        <taxon>Pleosporineae</taxon>
        <taxon>Phaeosphaeriaceae</taxon>
        <taxon>Parastagonospora</taxon>
    </lineage>
</organism>
<sequence length="870" mass="96601">MALPLPPASNLHSILLVTKSRSLGPRLVFHYPPLSPSAAALAGAKDPAWYRHDVSTASIGSGSSDSEWDSSTATDDDNDVEIGSRTSGGRGSGRTLTGASFRDRDRSKLGTEVWNKQETIDEDDPDDEDGDRNGRNRRRGGDYDWDTVLGFKTDALEKMLSPGKEFNKRRFELGVESIVFVGAPMFVREDGLWKKLKRRKKKRSDKEKLDDADFVKNLTISEEDEEADTVDEIPVKSKPEPFVYPEGFEPGYGHGSISSGPSGAPSEAGSDARSNSTSQDNNPDMNMFNVVFVLNPPALEYQQRVKEMYDNVTRKYAKALKYEEARFQYVWKESKRIIDLKQRAKESNESLTSTWRKIISTSPLAKSIAIMFDAISHDKIAHIHFDATFNTSFQIPQADSTPYLPTALEPQMPGLWLTTSNVVLADDESPMTQHAALLLLEDTETLIKDLGGEVTGNAAAIAFYIRNIIPTKSLLKISKRHNISAHDMEYIASHLVYWRRARLIAPLSPRDTYIVSPNADFSLLPSAVTAYAQRFPTLPTLPKVLNMLSGTPRPFRNFIPTTEHREAYMDILAWLMRGGWVTQLRTFAWVRVTPEIKAKVAAEMEREERIKKAEEARKELLSDNESVAESLLSDKRSSLLSAGTVRSSTPLRMAHRDRGTGGLGEEDMHHSTILSPRITASAAPSYRGSPTRASSDAGSTSSQRTTIALSSSQRPDSPSRLGVRDVKPHRPSPLHLHPTSPSRGSAVSLASPTATSPPPSPKDFKPSIVYSPQKATSLEARWLEKIGQSFEDVGNIIPTPNPSPPKGQDGGMFGITGKELREAWPILLKHLDGRHAIEDVAPRENMKRKRVAAMYNTIKERGWLVVVRHW</sequence>
<comment type="function">
    <text evidence="1">Mediates inactivation of the TORC1 complex in response to amino acid starvation. Required for meiotic nuclear division (By similarity).</text>
</comment>
<comment type="similarity">
    <text evidence="4">Belongs to the NPR3 family.</text>
</comment>
<gene>
    <name type="primary">NPR3</name>
    <name type="synonym">RMD11</name>
    <name type="ORF">SNOG_15055</name>
</gene>
<feature type="signal peptide" evidence="2">
    <location>
        <begin position="1"/>
        <end status="unknown"/>
    </location>
</feature>
<feature type="chain" id="PRO_0000301804" description="Nitrogen permease regulator 3">
    <location>
        <begin status="unknown"/>
        <end position="870"/>
    </location>
</feature>
<feature type="region of interest" description="Disordered" evidence="3">
    <location>
        <begin position="56"/>
        <end position="139"/>
    </location>
</feature>
<feature type="region of interest" description="Disordered" evidence="3">
    <location>
        <begin position="253"/>
        <end position="283"/>
    </location>
</feature>
<feature type="region of interest" description="Disordered" evidence="3">
    <location>
        <begin position="642"/>
        <end position="768"/>
    </location>
</feature>
<feature type="compositionally biased region" description="Low complexity" evidence="3">
    <location>
        <begin position="56"/>
        <end position="73"/>
    </location>
</feature>
<feature type="compositionally biased region" description="Acidic residues" evidence="3">
    <location>
        <begin position="120"/>
        <end position="130"/>
    </location>
</feature>
<feature type="compositionally biased region" description="Low complexity" evidence="3">
    <location>
        <begin position="255"/>
        <end position="272"/>
    </location>
</feature>
<feature type="compositionally biased region" description="Polar residues" evidence="3">
    <location>
        <begin position="273"/>
        <end position="283"/>
    </location>
</feature>
<feature type="compositionally biased region" description="Polar residues" evidence="3">
    <location>
        <begin position="691"/>
        <end position="716"/>
    </location>
</feature>
<feature type="compositionally biased region" description="Low complexity" evidence="3">
    <location>
        <begin position="733"/>
        <end position="754"/>
    </location>
</feature>
<accession>Q0TZN8</accession>
<proteinExistence type="inferred from homology"/>
<evidence type="ECO:0000250" key="1"/>
<evidence type="ECO:0000255" key="2"/>
<evidence type="ECO:0000256" key="3">
    <source>
        <dbReference type="SAM" id="MobiDB-lite"/>
    </source>
</evidence>
<evidence type="ECO:0000305" key="4"/>
<keyword id="KW-0469">Meiosis</keyword>
<keyword id="KW-0732">Signal</keyword>
<protein>
    <recommendedName>
        <fullName>Nitrogen permease regulator 3</fullName>
    </recommendedName>
    <alternativeName>
        <fullName>Required for meiotic nuclear division protein 11</fullName>
    </alternativeName>
</protein>